<evidence type="ECO:0000255" key="1">
    <source>
        <dbReference type="HAMAP-Rule" id="MF_01368"/>
    </source>
</evidence>
<evidence type="ECO:0000305" key="2"/>
<name>RL17_DESAH</name>
<organism>
    <name type="scientific">Desulforapulum autotrophicum (strain ATCC 43914 / DSM 3382 / VKM B-1955 / HRM2)</name>
    <name type="common">Desulfobacterium autotrophicum</name>
    <dbReference type="NCBI Taxonomy" id="177437"/>
    <lineage>
        <taxon>Bacteria</taxon>
        <taxon>Pseudomonadati</taxon>
        <taxon>Thermodesulfobacteriota</taxon>
        <taxon>Desulfobacteria</taxon>
        <taxon>Desulfobacterales</taxon>
        <taxon>Desulfobacteraceae</taxon>
        <taxon>Desulforapulum</taxon>
    </lineage>
</organism>
<proteinExistence type="inferred from homology"/>
<keyword id="KW-1185">Reference proteome</keyword>
<keyword id="KW-0687">Ribonucleoprotein</keyword>
<keyword id="KW-0689">Ribosomal protein</keyword>
<sequence length="120" mass="13598">MRHRKSGAKLNRTSSHRKAMFRNMVTSLFKHSSIKTTEAKAKELRKLADKMVTLAKRGDLHARRQAFSIIREKDVVHQLFNDAPSKFASRQGGYTRITKLGLRSGDAAPMTTIELICDEV</sequence>
<protein>
    <recommendedName>
        <fullName evidence="1">Large ribosomal subunit protein bL17</fullName>
    </recommendedName>
    <alternativeName>
        <fullName evidence="2">50S ribosomal protein L17</fullName>
    </alternativeName>
</protein>
<comment type="subunit">
    <text evidence="1">Part of the 50S ribosomal subunit. Contacts protein L32.</text>
</comment>
<comment type="similarity">
    <text evidence="1">Belongs to the bacterial ribosomal protein bL17 family.</text>
</comment>
<reference key="1">
    <citation type="journal article" date="2009" name="Environ. Microbiol.">
        <title>Genome sequence of Desulfobacterium autotrophicum HRM2, a marine sulfate reducer oxidizing organic carbon completely to carbon dioxide.</title>
        <authorList>
            <person name="Strittmatter A.W."/>
            <person name="Liesegang H."/>
            <person name="Rabus R."/>
            <person name="Decker I."/>
            <person name="Amann J."/>
            <person name="Andres S."/>
            <person name="Henne A."/>
            <person name="Fricke W.F."/>
            <person name="Martinez-Arias R."/>
            <person name="Bartels D."/>
            <person name="Goesmann A."/>
            <person name="Krause L."/>
            <person name="Puehler A."/>
            <person name="Klenk H.P."/>
            <person name="Richter M."/>
            <person name="Schuler M."/>
            <person name="Gloeckner F.O."/>
            <person name="Meyerdierks A."/>
            <person name="Gottschalk G."/>
            <person name="Amann R."/>
        </authorList>
    </citation>
    <scope>NUCLEOTIDE SEQUENCE [LARGE SCALE GENOMIC DNA]</scope>
    <source>
        <strain>ATCC 43914 / DSM 3382 / VKM B-1955 / HRM2</strain>
    </source>
</reference>
<accession>C0Q9U6</accession>
<dbReference type="EMBL" id="CP001087">
    <property type="protein sequence ID" value="ACN16664.1"/>
    <property type="molecule type" value="Genomic_DNA"/>
</dbReference>
<dbReference type="RefSeq" id="WP_015905414.1">
    <property type="nucleotide sequence ID" value="NC_012108.1"/>
</dbReference>
<dbReference type="SMR" id="C0Q9U6"/>
<dbReference type="STRING" id="177437.HRM2_35990"/>
<dbReference type="KEGG" id="dat:HRM2_35990"/>
<dbReference type="eggNOG" id="COG0203">
    <property type="taxonomic scope" value="Bacteria"/>
</dbReference>
<dbReference type="HOGENOM" id="CLU_074407_2_2_7"/>
<dbReference type="OrthoDB" id="9809073at2"/>
<dbReference type="Proteomes" id="UP000000442">
    <property type="component" value="Chromosome"/>
</dbReference>
<dbReference type="GO" id="GO:0022625">
    <property type="term" value="C:cytosolic large ribosomal subunit"/>
    <property type="evidence" value="ECO:0007669"/>
    <property type="project" value="TreeGrafter"/>
</dbReference>
<dbReference type="GO" id="GO:0003735">
    <property type="term" value="F:structural constituent of ribosome"/>
    <property type="evidence" value="ECO:0007669"/>
    <property type="project" value="InterPro"/>
</dbReference>
<dbReference type="GO" id="GO:0006412">
    <property type="term" value="P:translation"/>
    <property type="evidence" value="ECO:0007669"/>
    <property type="project" value="UniProtKB-UniRule"/>
</dbReference>
<dbReference type="FunFam" id="3.90.1030.10:FF:000001">
    <property type="entry name" value="50S ribosomal protein L17"/>
    <property type="match status" value="1"/>
</dbReference>
<dbReference type="Gene3D" id="3.90.1030.10">
    <property type="entry name" value="Ribosomal protein L17"/>
    <property type="match status" value="1"/>
</dbReference>
<dbReference type="HAMAP" id="MF_01368">
    <property type="entry name" value="Ribosomal_bL17"/>
    <property type="match status" value="1"/>
</dbReference>
<dbReference type="InterPro" id="IPR000456">
    <property type="entry name" value="Ribosomal_bL17"/>
</dbReference>
<dbReference type="InterPro" id="IPR047859">
    <property type="entry name" value="Ribosomal_bL17_CS"/>
</dbReference>
<dbReference type="InterPro" id="IPR036373">
    <property type="entry name" value="Ribosomal_bL17_sf"/>
</dbReference>
<dbReference type="NCBIfam" id="TIGR00059">
    <property type="entry name" value="L17"/>
    <property type="match status" value="1"/>
</dbReference>
<dbReference type="PANTHER" id="PTHR14413:SF16">
    <property type="entry name" value="LARGE RIBOSOMAL SUBUNIT PROTEIN BL17M"/>
    <property type="match status" value="1"/>
</dbReference>
<dbReference type="PANTHER" id="PTHR14413">
    <property type="entry name" value="RIBOSOMAL PROTEIN L17"/>
    <property type="match status" value="1"/>
</dbReference>
<dbReference type="Pfam" id="PF01196">
    <property type="entry name" value="Ribosomal_L17"/>
    <property type="match status" value="1"/>
</dbReference>
<dbReference type="SUPFAM" id="SSF64263">
    <property type="entry name" value="Prokaryotic ribosomal protein L17"/>
    <property type="match status" value="1"/>
</dbReference>
<dbReference type="PROSITE" id="PS01167">
    <property type="entry name" value="RIBOSOMAL_L17"/>
    <property type="match status" value="1"/>
</dbReference>
<gene>
    <name evidence="1" type="primary">rplQ</name>
    <name type="ordered locus">HRM2_35990</name>
</gene>
<feature type="chain" id="PRO_1000215002" description="Large ribosomal subunit protein bL17">
    <location>
        <begin position="1"/>
        <end position="120"/>
    </location>
</feature>